<reference key="1">
    <citation type="journal article" date="2005" name="Science">
        <title>Genome sequence of the PCE-dechlorinating bacterium Dehalococcoides ethenogenes.</title>
        <authorList>
            <person name="Seshadri R."/>
            <person name="Adrian L."/>
            <person name="Fouts D.E."/>
            <person name="Eisen J.A."/>
            <person name="Phillippy A.M."/>
            <person name="Methe B.A."/>
            <person name="Ward N.L."/>
            <person name="Nelson W.C."/>
            <person name="DeBoy R.T."/>
            <person name="Khouri H.M."/>
            <person name="Kolonay J.F."/>
            <person name="Dodson R.J."/>
            <person name="Daugherty S.C."/>
            <person name="Brinkac L.M."/>
            <person name="Sullivan S.A."/>
            <person name="Madupu R."/>
            <person name="Nelson K.E."/>
            <person name="Kang K.H."/>
            <person name="Impraim M."/>
            <person name="Tran K."/>
            <person name="Robinson J.M."/>
            <person name="Forberger H.A."/>
            <person name="Fraser C.M."/>
            <person name="Zinder S.H."/>
            <person name="Heidelberg J.F."/>
        </authorList>
    </citation>
    <scope>NUCLEOTIDE SEQUENCE [LARGE SCALE GENOMIC DNA]</scope>
    <source>
        <strain>ATCC BAA-2266 / KCTC 15142 / 195</strain>
    </source>
</reference>
<sequence length="120" mass="13267">MKHSNRLTRREEYSRVLASGGTYIGQLAVMKAVPNSLELSRVGFIVSKKVGGAVERNRAKRILRESLRTTGLKQGWDIVFIARAKAATVKCAEMERVVKHLLGKAQILSKANEKTSSKAD</sequence>
<protein>
    <recommendedName>
        <fullName evidence="1">Ribonuclease P protein component</fullName>
        <shortName evidence="1">RNase P protein</shortName>
        <shortName evidence="1">RNaseP protein</shortName>
        <ecNumber evidence="1">3.1.26.5</ecNumber>
    </recommendedName>
    <alternativeName>
        <fullName evidence="1">Protein C5</fullName>
    </alternativeName>
</protein>
<comment type="function">
    <text evidence="1">RNaseP catalyzes the removal of the 5'-leader sequence from pre-tRNA to produce the mature 5'-terminus. It can also cleave other RNA substrates such as 4.5S RNA. The protein component plays an auxiliary but essential role in vivo by binding to the 5'-leader sequence and broadening the substrate specificity of the ribozyme.</text>
</comment>
<comment type="catalytic activity">
    <reaction evidence="1">
        <text>Endonucleolytic cleavage of RNA, removing 5'-extranucleotides from tRNA precursor.</text>
        <dbReference type="EC" id="3.1.26.5"/>
    </reaction>
</comment>
<comment type="subunit">
    <text evidence="1">Consists of a catalytic RNA component (M1 or rnpB) and a protein subunit.</text>
</comment>
<comment type="similarity">
    <text evidence="1">Belongs to the RnpA family.</text>
</comment>
<proteinExistence type="inferred from homology"/>
<accession>Q3Z7P1</accession>
<feature type="chain" id="PRO_1000021403" description="Ribonuclease P protein component">
    <location>
        <begin position="1"/>
        <end position="120"/>
    </location>
</feature>
<dbReference type="EC" id="3.1.26.5" evidence="1"/>
<dbReference type="EMBL" id="CP000027">
    <property type="protein sequence ID" value="AAW39703.1"/>
    <property type="molecule type" value="Genomic_DNA"/>
</dbReference>
<dbReference type="RefSeq" id="WP_010936737.1">
    <property type="nucleotide sequence ID" value="NC_002936.3"/>
</dbReference>
<dbReference type="SMR" id="Q3Z7P1"/>
<dbReference type="FunCoup" id="Q3Z7P1">
    <property type="interactions" value="165"/>
</dbReference>
<dbReference type="STRING" id="243164.DET1042"/>
<dbReference type="GeneID" id="3229665"/>
<dbReference type="KEGG" id="det:DET1042"/>
<dbReference type="eggNOG" id="COG0594">
    <property type="taxonomic scope" value="Bacteria"/>
</dbReference>
<dbReference type="HOGENOM" id="CLU_117179_9_2_0"/>
<dbReference type="InParanoid" id="Q3Z7P1"/>
<dbReference type="Proteomes" id="UP000008289">
    <property type="component" value="Chromosome"/>
</dbReference>
<dbReference type="GO" id="GO:0030677">
    <property type="term" value="C:ribonuclease P complex"/>
    <property type="evidence" value="ECO:0007669"/>
    <property type="project" value="TreeGrafter"/>
</dbReference>
<dbReference type="GO" id="GO:0042781">
    <property type="term" value="F:3'-tRNA processing endoribonuclease activity"/>
    <property type="evidence" value="ECO:0007669"/>
    <property type="project" value="TreeGrafter"/>
</dbReference>
<dbReference type="GO" id="GO:0004526">
    <property type="term" value="F:ribonuclease P activity"/>
    <property type="evidence" value="ECO:0007669"/>
    <property type="project" value="UniProtKB-UniRule"/>
</dbReference>
<dbReference type="GO" id="GO:0000049">
    <property type="term" value="F:tRNA binding"/>
    <property type="evidence" value="ECO:0007669"/>
    <property type="project" value="UniProtKB-UniRule"/>
</dbReference>
<dbReference type="GO" id="GO:0001682">
    <property type="term" value="P:tRNA 5'-leader removal"/>
    <property type="evidence" value="ECO:0007669"/>
    <property type="project" value="UniProtKB-UniRule"/>
</dbReference>
<dbReference type="Gene3D" id="3.30.230.10">
    <property type="match status" value="1"/>
</dbReference>
<dbReference type="HAMAP" id="MF_00227">
    <property type="entry name" value="RNase_P"/>
    <property type="match status" value="1"/>
</dbReference>
<dbReference type="InterPro" id="IPR020568">
    <property type="entry name" value="Ribosomal_Su5_D2-typ_SF"/>
</dbReference>
<dbReference type="InterPro" id="IPR014721">
    <property type="entry name" value="Ribsml_uS5_D2-typ_fold_subgr"/>
</dbReference>
<dbReference type="InterPro" id="IPR000100">
    <property type="entry name" value="RNase_P"/>
</dbReference>
<dbReference type="InterPro" id="IPR020539">
    <property type="entry name" value="RNase_P_CS"/>
</dbReference>
<dbReference type="NCBIfam" id="TIGR00188">
    <property type="entry name" value="rnpA"/>
    <property type="match status" value="1"/>
</dbReference>
<dbReference type="PANTHER" id="PTHR33992">
    <property type="entry name" value="RIBONUCLEASE P PROTEIN COMPONENT"/>
    <property type="match status" value="1"/>
</dbReference>
<dbReference type="PANTHER" id="PTHR33992:SF1">
    <property type="entry name" value="RIBONUCLEASE P PROTEIN COMPONENT"/>
    <property type="match status" value="1"/>
</dbReference>
<dbReference type="Pfam" id="PF00825">
    <property type="entry name" value="Ribonuclease_P"/>
    <property type="match status" value="1"/>
</dbReference>
<dbReference type="SUPFAM" id="SSF54211">
    <property type="entry name" value="Ribosomal protein S5 domain 2-like"/>
    <property type="match status" value="1"/>
</dbReference>
<dbReference type="PROSITE" id="PS00648">
    <property type="entry name" value="RIBONUCLEASE_P"/>
    <property type="match status" value="1"/>
</dbReference>
<keyword id="KW-0255">Endonuclease</keyword>
<keyword id="KW-0378">Hydrolase</keyword>
<keyword id="KW-0540">Nuclease</keyword>
<keyword id="KW-0694">RNA-binding</keyword>
<keyword id="KW-0819">tRNA processing</keyword>
<name>RNPA_DEHM1</name>
<evidence type="ECO:0000255" key="1">
    <source>
        <dbReference type="HAMAP-Rule" id="MF_00227"/>
    </source>
</evidence>
<gene>
    <name evidence="1" type="primary">rnpA</name>
    <name type="ordered locus">DET1042</name>
</gene>
<organism>
    <name type="scientific">Dehalococcoides mccartyi (strain ATCC BAA-2266 / KCTC 15142 / 195)</name>
    <name type="common">Dehalococcoides ethenogenes (strain 195)</name>
    <dbReference type="NCBI Taxonomy" id="243164"/>
    <lineage>
        <taxon>Bacteria</taxon>
        <taxon>Bacillati</taxon>
        <taxon>Chloroflexota</taxon>
        <taxon>Dehalococcoidia</taxon>
        <taxon>Dehalococcoidales</taxon>
        <taxon>Dehalococcoidaceae</taxon>
        <taxon>Dehalococcoides</taxon>
    </lineage>
</organism>